<sequence>MLELRHRGSCPGPREAVSPPHREGEAAGGDHETESTSDKETDIDDRYGDLDSRTDSDIPEIPPSSDRTPEILKKALSGLSSRWKNWWIRGILTLTMISLFFLIIYMGSFMLMLLVLGIQVKCFHEIITIGYRVYHSYDLPWFRTLSWYFLLCVNYFFYGETVADYFATFVQREEQLQFLIRYHRFISFALYLAGFCMFVLSLVKKHYRLQFYMFAWTHVTLLITVTQSHLVIQNLFEGMIWFLVPISSVICNDITAYLFGFFFGRTPLIKLSPKKTWEGFIGGFFSTVVFGFIAAYVLSKYQYFVCPVEYRSDVNSFVTECEPSELFQLQTYSLPPFLKAVLRQERVSLYPFQIHSIALSTFASLIGPFGGFFASGFKRAFKIKDFANTIPGHGGIMDRFDCQYLMATFVHVYITSFIRGPNPSKVLQQLLVLQPEQQLNIYKTLKTHLIEKGILQPTLKV</sequence>
<name>CDS1_HUMAN</name>
<gene>
    <name evidence="13" type="primary">CDS1</name>
    <name type="synonym">CDS</name>
</gene>
<evidence type="ECO:0000250" key="1">
    <source>
        <dbReference type="UniProtKB" id="O35052"/>
    </source>
</evidence>
<evidence type="ECO:0000250" key="2">
    <source>
        <dbReference type="UniProtKB" id="P98191"/>
    </source>
</evidence>
<evidence type="ECO:0000255" key="3"/>
<evidence type="ECO:0000256" key="4">
    <source>
        <dbReference type="SAM" id="MobiDB-lite"/>
    </source>
</evidence>
<evidence type="ECO:0000269" key="5">
    <source>
    </source>
</evidence>
<evidence type="ECO:0000269" key="6">
    <source>
    </source>
</evidence>
<evidence type="ECO:0000269" key="7">
    <source>
    </source>
</evidence>
<evidence type="ECO:0000269" key="8">
    <source>
    </source>
</evidence>
<evidence type="ECO:0000269" key="9">
    <source>
    </source>
</evidence>
<evidence type="ECO:0000305" key="10"/>
<evidence type="ECO:0000305" key="11">
    <source>
    </source>
</evidence>
<evidence type="ECO:0000305" key="12">
    <source>
    </source>
</evidence>
<evidence type="ECO:0000312" key="13">
    <source>
        <dbReference type="HGNC" id="HGNC:1800"/>
    </source>
</evidence>
<protein>
    <recommendedName>
        <fullName evidence="10">Phosphatidate cytidylyltransferase 1</fullName>
        <ecNumber evidence="9">2.7.7.41</ecNumber>
    </recommendedName>
    <alternativeName>
        <fullName>CDP-DAG synthase 1</fullName>
    </alternativeName>
    <alternativeName>
        <fullName>CDP-DG synthase 1</fullName>
    </alternativeName>
    <alternativeName>
        <fullName>CDP-diacylglycerol synthase 1</fullName>
        <shortName>CDS 1</shortName>
    </alternativeName>
    <alternativeName>
        <fullName>CDP-diglyceride pyrophosphorylase 1</fullName>
    </alternativeName>
    <alternativeName>
        <fullName>CDP-diglyceride synthase 1</fullName>
    </alternativeName>
    <alternativeName>
        <fullName>CTP:phosphatidate cytidylyltransferase 1</fullName>
    </alternativeName>
</protein>
<feature type="chain" id="PRO_0000090713" description="Phosphatidate cytidylyltransferase 1">
    <location>
        <begin position="1"/>
        <end position="461"/>
    </location>
</feature>
<feature type="transmembrane region" description="Helical" evidence="3">
    <location>
        <begin position="96"/>
        <end position="116"/>
    </location>
</feature>
<feature type="transmembrane region" description="Helical" evidence="3">
    <location>
        <begin position="149"/>
        <end position="169"/>
    </location>
</feature>
<feature type="transmembrane region" description="Helical" evidence="3">
    <location>
        <begin position="183"/>
        <end position="203"/>
    </location>
</feature>
<feature type="transmembrane region" description="Helical" evidence="3">
    <location>
        <begin position="230"/>
        <end position="250"/>
    </location>
</feature>
<feature type="transmembrane region" description="Helical" evidence="3">
    <location>
        <begin position="279"/>
        <end position="299"/>
    </location>
</feature>
<feature type="transmembrane region" description="Helical" evidence="3">
    <location>
        <begin position="357"/>
        <end position="377"/>
    </location>
</feature>
<feature type="region of interest" description="Disordered" evidence="4">
    <location>
        <begin position="1"/>
        <end position="67"/>
    </location>
</feature>
<feature type="compositionally biased region" description="Basic and acidic residues" evidence="4">
    <location>
        <begin position="20"/>
        <end position="56"/>
    </location>
</feature>
<feature type="modified residue" description="Omega-N-methylarginine" evidence="2">
    <location>
        <position position="7"/>
    </location>
</feature>
<feature type="modified residue" description="Phosphoserine" evidence="1">
    <location>
        <position position="35"/>
    </location>
</feature>
<feature type="modified residue" description="Phosphoserine" evidence="2">
    <location>
        <position position="37"/>
    </location>
</feature>
<feature type="sequence variant" id="VAR_048736" description="In dbSNP:rs36068434.">
    <original>L</original>
    <variation>F</variation>
    <location>
        <position position="99"/>
    </location>
</feature>
<feature type="sequence variant" id="VAR_036129" description="In a breast cancer sample; somatic mutation." evidence="5">
    <original>K</original>
    <variation>T</variation>
    <location>
        <position position="204"/>
    </location>
</feature>
<feature type="sequence conflict" description="In Ref. 1; AAC50735." evidence="10" ref="1">
    <original>TLKTHLIEKGILQPTLKV</original>
    <variation>P</variation>
    <location>
        <begin position="444"/>
        <end position="461"/>
    </location>
</feature>
<proteinExistence type="evidence at protein level"/>
<comment type="function">
    <text evidence="2 6 7 8 9">Catalyzes the conversion of phosphatidic acid (PA) to CDP-diacylglycerol (CDP-DAG), an essential intermediate in the synthesis of phosphatidylglycerol, cardiolipin and phosphatidylinositol (PubMed:25375833, PubMed:9407135). Exhibits almost no acyl chain preference for PA, showing no discrimination for the sn-1/sn-2 acyl chain composition of PAs (PubMed:25375833). Plays an important role in regulating the growth of lipid droplets which are storage organelles at the center of lipid and energy homeostasis (PubMed:26946540, PubMed:31548309). Positively regulates the differentiation and development of adipocytes (By similarity).</text>
</comment>
<comment type="catalytic activity">
    <reaction evidence="9">
        <text>a 1,2-diacyl-sn-glycero-3-phosphate + CTP + H(+) = a CDP-1,2-diacyl-sn-glycerol + diphosphate</text>
        <dbReference type="Rhea" id="RHEA:16229"/>
        <dbReference type="ChEBI" id="CHEBI:15378"/>
        <dbReference type="ChEBI" id="CHEBI:33019"/>
        <dbReference type="ChEBI" id="CHEBI:37563"/>
        <dbReference type="ChEBI" id="CHEBI:58332"/>
        <dbReference type="ChEBI" id="CHEBI:58608"/>
        <dbReference type="EC" id="2.7.7.41"/>
    </reaction>
    <physiologicalReaction direction="left-to-right" evidence="12">
        <dbReference type="Rhea" id="RHEA:16230"/>
    </physiologicalReaction>
</comment>
<comment type="catalytic activity">
    <reaction evidence="6">
        <text>1-octadecanoyl-2-(5Z,8Z,11Z,14Z-eicosatetraenoyl)-sn-glycero-3-phosphate + CTP + H(+) = 1-octadecanoyl-2-(5Z,8Z,11Z,14Z-eicosatetraenoyl)-sn-glycero-3-cytidine-5'-diphosphate + diphosphate</text>
        <dbReference type="Rhea" id="RHEA:45648"/>
        <dbReference type="ChEBI" id="CHEBI:15378"/>
        <dbReference type="ChEBI" id="CHEBI:33019"/>
        <dbReference type="ChEBI" id="CHEBI:37563"/>
        <dbReference type="ChEBI" id="CHEBI:77091"/>
        <dbReference type="ChEBI" id="CHEBI:85349"/>
    </reaction>
    <physiologicalReaction direction="left-to-right" evidence="11">
        <dbReference type="Rhea" id="RHEA:45649"/>
    </physiologicalReaction>
</comment>
<comment type="catalytic activity">
    <reaction evidence="6">
        <text>1-octadecanoyl-2-(9Z,12Z-octadecadienoyl)-sn-glycero-3-phosphate + CTP + H(+) = 1-octadecanoyl-2-(9Z,12Z-octadecadienoyl)-sn-glycero-3-cytidine-5'-diphosphate + diphosphate</text>
        <dbReference type="Rhea" id="RHEA:45660"/>
        <dbReference type="ChEBI" id="CHEBI:15378"/>
        <dbReference type="ChEBI" id="CHEBI:33019"/>
        <dbReference type="ChEBI" id="CHEBI:37563"/>
        <dbReference type="ChEBI" id="CHEBI:77098"/>
        <dbReference type="ChEBI" id="CHEBI:85352"/>
    </reaction>
    <physiologicalReaction direction="left-to-right" evidence="11">
        <dbReference type="Rhea" id="RHEA:45661"/>
    </physiologicalReaction>
</comment>
<comment type="catalytic activity">
    <reaction evidence="6">
        <text>1-hexadecanoyl-2-(5Z,8Z,11Z,14Z-eicosatetraenoyl)-sn-glycero-3-phosphate + CTP + H(+) = 1-hexadecanoyl-2-(5Z,8Z,11Z,14Z-eicosatetraenoyl)-sn-glycero-3-cytidine-5'-diphosphate + diphosphate</text>
        <dbReference type="Rhea" id="RHEA:45652"/>
        <dbReference type="ChEBI" id="CHEBI:15378"/>
        <dbReference type="ChEBI" id="CHEBI:33019"/>
        <dbReference type="ChEBI" id="CHEBI:37563"/>
        <dbReference type="ChEBI" id="CHEBI:72864"/>
        <dbReference type="ChEBI" id="CHEBI:85350"/>
    </reaction>
    <physiologicalReaction direction="left-to-right" evidence="11">
        <dbReference type="Rhea" id="RHEA:45653"/>
    </physiologicalReaction>
</comment>
<comment type="catalytic activity">
    <reaction evidence="6">
        <text>1,2-di-(5Z,8Z,11Z,14Z)-eicosatetraenoyl-sn-glycero-3-phosphate + CTP + H(+) = 1,2-di-(5Z,8Z,11Z,14Z-eicosatetraenoyl)-sn-glycero-3-cytidine-5'-diphosphate + diphosphate</text>
        <dbReference type="Rhea" id="RHEA:45656"/>
        <dbReference type="ChEBI" id="CHEBI:15378"/>
        <dbReference type="ChEBI" id="CHEBI:33019"/>
        <dbReference type="ChEBI" id="CHEBI:37563"/>
        <dbReference type="ChEBI" id="CHEBI:77126"/>
        <dbReference type="ChEBI" id="CHEBI:85351"/>
    </reaction>
    <physiologicalReaction direction="left-to-right" evidence="11">
        <dbReference type="Rhea" id="RHEA:45657"/>
    </physiologicalReaction>
</comment>
<comment type="catalytic activity">
    <reaction evidence="6">
        <text>1-octadecanoyl-2-(9Z-octadecenoyl)-sn-glycero-3-phosphate + CTP + H(+) = 1-octadecanoyl-2-(9Z-octadecenoyl)-sn-glycero-3-cytidine-5'-diphosphate + diphosphate</text>
        <dbReference type="Rhea" id="RHEA:45664"/>
        <dbReference type="ChEBI" id="CHEBI:15378"/>
        <dbReference type="ChEBI" id="CHEBI:33019"/>
        <dbReference type="ChEBI" id="CHEBI:37563"/>
        <dbReference type="ChEBI" id="CHEBI:74560"/>
        <dbReference type="ChEBI" id="CHEBI:85353"/>
    </reaction>
    <physiologicalReaction direction="left-to-right" evidence="11">
        <dbReference type="Rhea" id="RHEA:45665"/>
    </physiologicalReaction>
</comment>
<comment type="catalytic activity">
    <reaction evidence="6">
        <text>1-octadecanoyl-2-(4Z,7Z,10Z,13Z,16Z,19Z-docosahexaenoyl)-sn-glycero-3-phosphate + CTP + H(+) = 1-octadecanoyl-2-(4Z,7Z,10Z,13Z,16Z,19Z-docosahexaenoyl)-sn-glycero-3-cytidine-5'-diphosphate + diphosphate</text>
        <dbReference type="Rhea" id="RHEA:45668"/>
        <dbReference type="ChEBI" id="CHEBI:15378"/>
        <dbReference type="ChEBI" id="CHEBI:33019"/>
        <dbReference type="ChEBI" id="CHEBI:37563"/>
        <dbReference type="ChEBI" id="CHEBI:77130"/>
        <dbReference type="ChEBI" id="CHEBI:85354"/>
    </reaction>
    <physiologicalReaction direction="left-to-right" evidence="11">
        <dbReference type="Rhea" id="RHEA:45669"/>
    </physiologicalReaction>
</comment>
<comment type="catalytic activity">
    <reaction evidence="6">
        <text>1,2-di-(9Z,12Z-octadecadienoyl)-sn-glycero-3-phosphate + CTP + H(+) = 1,2-di-(9Z,12Z-octadecadienoyl)-sn-glycero-3-cytidine-5'-diphosphate + diphosphate</text>
        <dbReference type="Rhea" id="RHEA:45672"/>
        <dbReference type="ChEBI" id="CHEBI:15378"/>
        <dbReference type="ChEBI" id="CHEBI:33019"/>
        <dbReference type="ChEBI" id="CHEBI:37563"/>
        <dbReference type="ChEBI" id="CHEBI:77128"/>
        <dbReference type="ChEBI" id="CHEBI:85355"/>
    </reaction>
    <physiologicalReaction direction="left-to-right" evidence="11">
        <dbReference type="Rhea" id="RHEA:45673"/>
    </physiologicalReaction>
</comment>
<comment type="catalytic activity">
    <reaction evidence="6">
        <text>1,2-di-(9Z-octadecenoyl)-sn-glycero-3-phosphate + CTP + H(+) = 1,2-di-(9Z-octadecenoyl)-sn-glycero-3-cytidine-5'-diphosphate + diphosphate</text>
        <dbReference type="Rhea" id="RHEA:45676"/>
        <dbReference type="ChEBI" id="CHEBI:15378"/>
        <dbReference type="ChEBI" id="CHEBI:33019"/>
        <dbReference type="ChEBI" id="CHEBI:37563"/>
        <dbReference type="ChEBI" id="CHEBI:74546"/>
        <dbReference type="ChEBI" id="CHEBI:85356"/>
    </reaction>
    <physiologicalReaction direction="left-to-right" evidence="11">
        <dbReference type="Rhea" id="RHEA:45677"/>
    </physiologicalReaction>
</comment>
<comment type="cofactor">
    <cofactor evidence="1">
        <name>Mg(2+)</name>
        <dbReference type="ChEBI" id="CHEBI:18420"/>
    </cofactor>
</comment>
<comment type="activity regulation">
    <text evidence="6">Inhibited by its anionic phospholipid end products, with phosphatidylinositol-(4,5)- bisphosphate showing the strongest inhibition.</text>
</comment>
<comment type="biophysicochemical properties">
    <kinetics>
        <KM evidence="6">0.8 uM for 1-stearoyl-2-arachidonoyl-sn-phosphatidic acid</KM>
        <KM evidence="6">0.6 uM for 1-stearoyl-2-linoleoyl-sn-phosphatidic acid</KM>
        <Vmax evidence="6">3.3 umol/min/mg enzyme for 1-stearoyl-2-arachidonoyl-sn-phosphatidic acid</Vmax>
        <Vmax evidence="6">3.6 umol/min/mg enzyme for 1-stearoyl-2-linoleoyl-sn-phosphatidic acid</Vmax>
    </kinetics>
</comment>
<comment type="pathway">
    <text>Phospholipid metabolism; CDP-diacylglycerol biosynthesis; CDP-diacylglycerol from sn-glycerol 3-phosphate: step 3/3.</text>
</comment>
<comment type="subunit">
    <text evidence="1 2">Homodimer (By similarity). Interacts with FOS; this interaction may enhance catalytic activity (By similarity).</text>
</comment>
<comment type="interaction">
    <interactant intactId="EBI-13295305">
        <id>Q92903</id>
    </interactant>
    <interactant intactId="EBI-18304435">
        <id>Q5JX71</id>
        <label>FAM209A</label>
    </interactant>
    <organismsDiffer>false</organismsDiffer>
    <experiments>3</experiments>
</comment>
<comment type="interaction">
    <interactant intactId="EBI-13295305">
        <id>Q92903</id>
    </interactant>
    <interactant intactId="EBI-10192441">
        <id>Q86VR2</id>
        <label>RETREG3</label>
    </interactant>
    <organismsDiffer>false</organismsDiffer>
    <experiments>3</experiments>
</comment>
<comment type="interaction">
    <interactant intactId="EBI-13295305">
        <id>Q92903</id>
    </interactant>
    <interactant intactId="EBI-18159983">
        <id>Q3KNW5</id>
        <label>SLC10A6</label>
    </interactant>
    <organismsDiffer>false</organismsDiffer>
    <experiments>3</experiments>
</comment>
<comment type="interaction">
    <interactant intactId="EBI-13295305">
        <id>Q92903</id>
    </interactant>
    <interactant intactId="EBI-12808018">
        <id>Q9UKG4</id>
        <label>SLC13A4</label>
    </interactant>
    <organismsDiffer>false</organismsDiffer>
    <experiments>3</experiments>
</comment>
<comment type="interaction">
    <interactant intactId="EBI-13295305">
        <id>Q92903</id>
    </interactant>
    <interactant intactId="EBI-10982110">
        <id>Q96Q45-2</id>
        <label>TMEM237</label>
    </interactant>
    <organismsDiffer>false</organismsDiffer>
    <experiments>3</experiments>
</comment>
<comment type="interaction">
    <interactant intactId="EBI-13295305">
        <id>Q92903</id>
    </interactant>
    <interactant intactId="EBI-988826">
        <id>Q9Y385</id>
        <label>UBE2J1</label>
    </interactant>
    <organismsDiffer>false</organismsDiffer>
    <experiments>3</experiments>
</comment>
<comment type="subcellular location">
    <subcellularLocation>
        <location evidence="6 7 8">Endoplasmic reticulum membrane</location>
        <topology evidence="3">Multi-pass membrane protein</topology>
    </subcellularLocation>
</comment>
<comment type="tissue specificity">
    <text evidence="9">Expressed in adult tissues such as placenta, brain, small intestine, ovary, testis and prostate. Highly expressed in fetal kidney, lung and brain. Lower level in fetal liver.</text>
</comment>
<comment type="similarity">
    <text evidence="10">Belongs to the CDS family.</text>
</comment>
<dbReference type="EC" id="2.7.7.41" evidence="9"/>
<dbReference type="EMBL" id="U65887">
    <property type="protein sequence ID" value="AAC50735.1"/>
    <property type="molecule type" value="mRNA"/>
</dbReference>
<dbReference type="EMBL" id="U60808">
    <property type="protein sequence ID" value="AAC51184.1"/>
    <property type="molecule type" value="mRNA"/>
</dbReference>
<dbReference type="EMBL" id="AK314245">
    <property type="protein sequence ID" value="BAG36912.1"/>
    <property type="molecule type" value="mRNA"/>
</dbReference>
<dbReference type="EMBL" id="CH471057">
    <property type="protein sequence ID" value="EAX05950.1"/>
    <property type="molecule type" value="Genomic_DNA"/>
</dbReference>
<dbReference type="EMBL" id="BC074833">
    <property type="protein sequence ID" value="AAH74833.1"/>
    <property type="molecule type" value="mRNA"/>
</dbReference>
<dbReference type="EMBL" id="BC074881">
    <property type="protein sequence ID" value="AAH74881.1"/>
    <property type="molecule type" value="mRNA"/>
</dbReference>
<dbReference type="CCDS" id="CCDS3608.1"/>
<dbReference type="RefSeq" id="NP_001254.2">
    <property type="nucleotide sequence ID" value="NM_001263.3"/>
</dbReference>
<dbReference type="BioGRID" id="107471">
    <property type="interactions" value="61"/>
</dbReference>
<dbReference type="CORUM" id="Q92903"/>
<dbReference type="FunCoup" id="Q92903">
    <property type="interactions" value="1757"/>
</dbReference>
<dbReference type="IntAct" id="Q92903">
    <property type="interactions" value="49"/>
</dbReference>
<dbReference type="STRING" id="9606.ENSP00000295887"/>
<dbReference type="SwissLipids" id="SLP:000000532"/>
<dbReference type="GlyGen" id="Q92903">
    <property type="glycosylation" value="1 site, 1 O-linked glycan (1 site)"/>
</dbReference>
<dbReference type="iPTMnet" id="Q92903"/>
<dbReference type="PhosphoSitePlus" id="Q92903"/>
<dbReference type="SwissPalm" id="Q92903"/>
<dbReference type="BioMuta" id="CDS1"/>
<dbReference type="DMDM" id="3123204"/>
<dbReference type="jPOST" id="Q92903"/>
<dbReference type="MassIVE" id="Q92903"/>
<dbReference type="PaxDb" id="9606-ENSP00000295887"/>
<dbReference type="PeptideAtlas" id="Q92903"/>
<dbReference type="ProteomicsDB" id="75588"/>
<dbReference type="Antibodypedia" id="25245">
    <property type="antibodies" value="85 antibodies from 21 providers"/>
</dbReference>
<dbReference type="DNASU" id="1040"/>
<dbReference type="Ensembl" id="ENST00000295887.6">
    <property type="protein sequence ID" value="ENSP00000295887.5"/>
    <property type="gene ID" value="ENSG00000163624.6"/>
</dbReference>
<dbReference type="GeneID" id="1040"/>
<dbReference type="KEGG" id="hsa:1040"/>
<dbReference type="MANE-Select" id="ENST00000295887.6">
    <property type="protein sequence ID" value="ENSP00000295887.5"/>
    <property type="RefSeq nucleotide sequence ID" value="NM_001263.4"/>
    <property type="RefSeq protein sequence ID" value="NP_001254.2"/>
</dbReference>
<dbReference type="UCSC" id="uc011ccv.3">
    <property type="organism name" value="human"/>
</dbReference>
<dbReference type="AGR" id="HGNC:1800"/>
<dbReference type="CTD" id="1040"/>
<dbReference type="DisGeNET" id="1040"/>
<dbReference type="GeneCards" id="CDS1"/>
<dbReference type="HGNC" id="HGNC:1800">
    <property type="gene designation" value="CDS1"/>
</dbReference>
<dbReference type="HPA" id="ENSG00000163624">
    <property type="expression patterns" value="Low tissue specificity"/>
</dbReference>
<dbReference type="MIM" id="603548">
    <property type="type" value="gene"/>
</dbReference>
<dbReference type="neXtProt" id="NX_Q92903"/>
<dbReference type="OpenTargets" id="ENSG00000163624"/>
<dbReference type="PharmGKB" id="PA26346"/>
<dbReference type="VEuPathDB" id="HostDB:ENSG00000163624"/>
<dbReference type="eggNOG" id="KOG1440">
    <property type="taxonomic scope" value="Eukaryota"/>
</dbReference>
<dbReference type="GeneTree" id="ENSGT00940000158223"/>
<dbReference type="HOGENOM" id="CLU_023471_0_1_1"/>
<dbReference type="InParanoid" id="Q92903"/>
<dbReference type="OMA" id="FFAYMYF"/>
<dbReference type="OrthoDB" id="10260889at2759"/>
<dbReference type="PAN-GO" id="Q92903">
    <property type="GO annotations" value="1 GO annotation based on evolutionary models"/>
</dbReference>
<dbReference type="PhylomeDB" id="Q92903"/>
<dbReference type="TreeFam" id="TF313464"/>
<dbReference type="BRENDA" id="2.7.7.41">
    <property type="organism ID" value="2681"/>
</dbReference>
<dbReference type="PathwayCommons" id="Q92903"/>
<dbReference type="Reactome" id="R-HSA-1483226">
    <property type="pathway name" value="Synthesis of PI"/>
</dbReference>
<dbReference type="SignaLink" id="Q92903"/>
<dbReference type="SIGNOR" id="Q92903"/>
<dbReference type="UniPathway" id="UPA00557">
    <property type="reaction ID" value="UER00614"/>
</dbReference>
<dbReference type="BioGRID-ORCS" id="1040">
    <property type="hits" value="14 hits in 1153 CRISPR screens"/>
</dbReference>
<dbReference type="ChiTaRS" id="CDS1">
    <property type="organism name" value="human"/>
</dbReference>
<dbReference type="GeneWiki" id="CDS1_(gene)"/>
<dbReference type="GenomeRNAi" id="1040"/>
<dbReference type="Pharos" id="Q92903">
    <property type="development level" value="Tbio"/>
</dbReference>
<dbReference type="PRO" id="PR:Q92903"/>
<dbReference type="Proteomes" id="UP000005640">
    <property type="component" value="Chromosome 4"/>
</dbReference>
<dbReference type="RNAct" id="Q92903">
    <property type="molecule type" value="protein"/>
</dbReference>
<dbReference type="Bgee" id="ENSG00000163624">
    <property type="expression patterns" value="Expressed in bronchial epithelial cell and 184 other cell types or tissues"/>
</dbReference>
<dbReference type="ExpressionAtlas" id="Q92903">
    <property type="expression patterns" value="baseline and differential"/>
</dbReference>
<dbReference type="GO" id="GO:0005783">
    <property type="term" value="C:endoplasmic reticulum"/>
    <property type="evidence" value="ECO:0000314"/>
    <property type="project" value="UniProtKB"/>
</dbReference>
<dbReference type="GO" id="GO:0005789">
    <property type="term" value="C:endoplasmic reticulum membrane"/>
    <property type="evidence" value="ECO:0000250"/>
    <property type="project" value="UniProtKB"/>
</dbReference>
<dbReference type="GO" id="GO:0016020">
    <property type="term" value="C:membrane"/>
    <property type="evidence" value="ECO:0000250"/>
    <property type="project" value="UniProtKB"/>
</dbReference>
<dbReference type="GO" id="GO:0004142">
    <property type="term" value="F:diacylglycerol cholinephosphotransferase activity"/>
    <property type="evidence" value="ECO:0000303"/>
    <property type="project" value="UniProtKB"/>
</dbReference>
<dbReference type="GO" id="GO:0004605">
    <property type="term" value="F:phosphatidate cytidylyltransferase activity"/>
    <property type="evidence" value="ECO:0000314"/>
    <property type="project" value="UniProtKB"/>
</dbReference>
<dbReference type="GO" id="GO:0016024">
    <property type="term" value="P:CDP-diacylglycerol biosynthetic process"/>
    <property type="evidence" value="ECO:0000314"/>
    <property type="project" value="UniProtKB"/>
</dbReference>
<dbReference type="GO" id="GO:0140042">
    <property type="term" value="P:lipid droplet formation"/>
    <property type="evidence" value="ECO:0000315"/>
    <property type="project" value="UniProtKB"/>
</dbReference>
<dbReference type="GO" id="GO:0006661">
    <property type="term" value="P:phosphatidylinositol biosynthetic process"/>
    <property type="evidence" value="ECO:0000314"/>
    <property type="project" value="UniProtKB"/>
</dbReference>
<dbReference type="GO" id="GO:0007602">
    <property type="term" value="P:phototransduction"/>
    <property type="evidence" value="ECO:0000303"/>
    <property type="project" value="UniProtKB"/>
</dbReference>
<dbReference type="GO" id="GO:0045600">
    <property type="term" value="P:positive regulation of fat cell differentiation"/>
    <property type="evidence" value="ECO:0000250"/>
    <property type="project" value="UniProtKB"/>
</dbReference>
<dbReference type="GO" id="GO:0007165">
    <property type="term" value="P:signal transduction"/>
    <property type="evidence" value="ECO:0000303"/>
    <property type="project" value="UniProtKB"/>
</dbReference>
<dbReference type="InterPro" id="IPR000374">
    <property type="entry name" value="PC_trans"/>
</dbReference>
<dbReference type="InterPro" id="IPR016720">
    <property type="entry name" value="PC_Trfase_euk"/>
</dbReference>
<dbReference type="PANTHER" id="PTHR13773">
    <property type="entry name" value="PHOSPHATIDATE CYTIDYLYLTRANSFERASE"/>
    <property type="match status" value="1"/>
</dbReference>
<dbReference type="PANTHER" id="PTHR13773:SF16">
    <property type="entry name" value="PHOSPHATIDATE CYTIDYLYLTRANSFERASE 1"/>
    <property type="match status" value="1"/>
</dbReference>
<dbReference type="Pfam" id="PF01148">
    <property type="entry name" value="CTP_transf_1"/>
    <property type="match status" value="1"/>
</dbReference>
<dbReference type="PIRSF" id="PIRSF018269">
    <property type="entry name" value="PC_trans_euk"/>
    <property type="match status" value="1"/>
</dbReference>
<dbReference type="PROSITE" id="PS01315">
    <property type="entry name" value="CDS"/>
    <property type="match status" value="1"/>
</dbReference>
<keyword id="KW-0256">Endoplasmic reticulum</keyword>
<keyword id="KW-0444">Lipid biosynthesis</keyword>
<keyword id="KW-0443">Lipid metabolism</keyword>
<keyword id="KW-0460">Magnesium</keyword>
<keyword id="KW-0472">Membrane</keyword>
<keyword id="KW-0488">Methylation</keyword>
<keyword id="KW-0548">Nucleotidyltransferase</keyword>
<keyword id="KW-0594">Phospholipid biosynthesis</keyword>
<keyword id="KW-1208">Phospholipid metabolism</keyword>
<keyword id="KW-0597">Phosphoprotein</keyword>
<keyword id="KW-1267">Proteomics identification</keyword>
<keyword id="KW-1185">Reference proteome</keyword>
<keyword id="KW-0808">Transferase</keyword>
<keyword id="KW-0812">Transmembrane</keyword>
<keyword id="KW-1133">Transmembrane helix</keyword>
<organism>
    <name type="scientific">Homo sapiens</name>
    <name type="common">Human</name>
    <dbReference type="NCBI Taxonomy" id="9606"/>
    <lineage>
        <taxon>Eukaryota</taxon>
        <taxon>Metazoa</taxon>
        <taxon>Chordata</taxon>
        <taxon>Craniata</taxon>
        <taxon>Vertebrata</taxon>
        <taxon>Euteleostomi</taxon>
        <taxon>Mammalia</taxon>
        <taxon>Eutheria</taxon>
        <taxon>Euarchontoglires</taxon>
        <taxon>Primates</taxon>
        <taxon>Haplorrhini</taxon>
        <taxon>Catarrhini</taxon>
        <taxon>Hominidae</taxon>
        <taxon>Homo</taxon>
    </lineage>
</organism>
<reference key="1">
    <citation type="journal article" date="1996" name="J. Neurochem.">
        <title>Cloning of CDP-diacylglycerol synthase from a human neuronal cell line.</title>
        <authorList>
            <person name="Heacock A.M."/>
            <person name="Uhler M.D."/>
            <person name="Agranoff B.W."/>
        </authorList>
    </citation>
    <scope>NUCLEOTIDE SEQUENCE [MRNA]</scope>
    <source>
        <tissue>Neuron</tissue>
    </source>
</reference>
<reference key="2">
    <citation type="journal article" date="1997" name="DNA Cell Biol.">
        <title>Isolation and expression of an isoform of human CDP-diacylglycerol synthase cDNA.</title>
        <authorList>
            <person name="Weeks R."/>
            <person name="Dowhan W."/>
            <person name="Shen H."/>
            <person name="Balantac N."/>
            <person name="Meengs B."/>
            <person name="Nudelman E."/>
            <person name="Leung D.W."/>
        </authorList>
    </citation>
    <scope>NUCLEOTIDE SEQUENCE [MRNA]</scope>
    <source>
        <tissue>Leukocyte</tissue>
        <tissue>Placenta</tissue>
    </source>
</reference>
<reference key="3">
    <citation type="journal article" date="1997" name="J. Biol. Chem.">
        <title>The role of CDP-diacylglycerol synthetase and phosphatidylinositol synthase activity levels in the regulation of cellular phosphatidylinositol content.</title>
        <authorList>
            <person name="Lykidis A."/>
            <person name="Jackson P.D."/>
            <person name="Rock C.O."/>
            <person name="Jackowski S."/>
        </authorList>
    </citation>
    <scope>NUCLEOTIDE SEQUENCE [MRNA]</scope>
    <scope>FUNCTION</scope>
    <scope>CATALYTIC ACTIVITY</scope>
    <scope>TISSUE SPECIFICITY</scope>
    <source>
        <tissue>Placenta</tissue>
    </source>
</reference>
<reference key="4">
    <citation type="journal article" date="1998" name="Genomics">
        <title>Isolation and chromosomal localization of two human CDP-diacylglycerol synthase (CDS) genes.</title>
        <authorList>
            <person name="Halford S."/>
            <person name="Dulai K.S."/>
            <person name="Daw S.C.M."/>
            <person name="Fitzgibbon J."/>
            <person name="Hunt D.M."/>
        </authorList>
    </citation>
    <scope>NUCLEOTIDE SEQUENCE [MRNA]</scope>
    <source>
        <tissue>Retina</tissue>
    </source>
</reference>
<reference key="5">
    <citation type="journal article" date="2004" name="Nat. Genet.">
        <title>Complete sequencing and characterization of 21,243 full-length human cDNAs.</title>
        <authorList>
            <person name="Ota T."/>
            <person name="Suzuki Y."/>
            <person name="Nishikawa T."/>
            <person name="Otsuki T."/>
            <person name="Sugiyama T."/>
            <person name="Irie R."/>
            <person name="Wakamatsu A."/>
            <person name="Hayashi K."/>
            <person name="Sato H."/>
            <person name="Nagai K."/>
            <person name="Kimura K."/>
            <person name="Makita H."/>
            <person name="Sekine M."/>
            <person name="Obayashi M."/>
            <person name="Nishi T."/>
            <person name="Shibahara T."/>
            <person name="Tanaka T."/>
            <person name="Ishii S."/>
            <person name="Yamamoto J."/>
            <person name="Saito K."/>
            <person name="Kawai Y."/>
            <person name="Isono Y."/>
            <person name="Nakamura Y."/>
            <person name="Nagahari K."/>
            <person name="Murakami K."/>
            <person name="Yasuda T."/>
            <person name="Iwayanagi T."/>
            <person name="Wagatsuma M."/>
            <person name="Shiratori A."/>
            <person name="Sudo H."/>
            <person name="Hosoiri T."/>
            <person name="Kaku Y."/>
            <person name="Kodaira H."/>
            <person name="Kondo H."/>
            <person name="Sugawara M."/>
            <person name="Takahashi M."/>
            <person name="Kanda K."/>
            <person name="Yokoi T."/>
            <person name="Furuya T."/>
            <person name="Kikkawa E."/>
            <person name="Omura Y."/>
            <person name="Abe K."/>
            <person name="Kamihara K."/>
            <person name="Katsuta N."/>
            <person name="Sato K."/>
            <person name="Tanikawa M."/>
            <person name="Yamazaki M."/>
            <person name="Ninomiya K."/>
            <person name="Ishibashi T."/>
            <person name="Yamashita H."/>
            <person name="Murakawa K."/>
            <person name="Fujimori K."/>
            <person name="Tanai H."/>
            <person name="Kimata M."/>
            <person name="Watanabe M."/>
            <person name="Hiraoka S."/>
            <person name="Chiba Y."/>
            <person name="Ishida S."/>
            <person name="Ono Y."/>
            <person name="Takiguchi S."/>
            <person name="Watanabe S."/>
            <person name="Yosida M."/>
            <person name="Hotuta T."/>
            <person name="Kusano J."/>
            <person name="Kanehori K."/>
            <person name="Takahashi-Fujii A."/>
            <person name="Hara H."/>
            <person name="Tanase T.-O."/>
            <person name="Nomura Y."/>
            <person name="Togiya S."/>
            <person name="Komai F."/>
            <person name="Hara R."/>
            <person name="Takeuchi K."/>
            <person name="Arita M."/>
            <person name="Imose N."/>
            <person name="Musashino K."/>
            <person name="Yuuki H."/>
            <person name="Oshima A."/>
            <person name="Sasaki N."/>
            <person name="Aotsuka S."/>
            <person name="Yoshikawa Y."/>
            <person name="Matsunawa H."/>
            <person name="Ichihara T."/>
            <person name="Shiohata N."/>
            <person name="Sano S."/>
            <person name="Moriya S."/>
            <person name="Momiyama H."/>
            <person name="Satoh N."/>
            <person name="Takami S."/>
            <person name="Terashima Y."/>
            <person name="Suzuki O."/>
            <person name="Nakagawa S."/>
            <person name="Senoh A."/>
            <person name="Mizoguchi H."/>
            <person name="Goto Y."/>
            <person name="Shimizu F."/>
            <person name="Wakebe H."/>
            <person name="Hishigaki H."/>
            <person name="Watanabe T."/>
            <person name="Sugiyama A."/>
            <person name="Takemoto M."/>
            <person name="Kawakami B."/>
            <person name="Yamazaki M."/>
            <person name="Watanabe K."/>
            <person name="Kumagai A."/>
            <person name="Itakura S."/>
            <person name="Fukuzumi Y."/>
            <person name="Fujimori Y."/>
            <person name="Komiyama M."/>
            <person name="Tashiro H."/>
            <person name="Tanigami A."/>
            <person name="Fujiwara T."/>
            <person name="Ono T."/>
            <person name="Yamada K."/>
            <person name="Fujii Y."/>
            <person name="Ozaki K."/>
            <person name="Hirao M."/>
            <person name="Ohmori Y."/>
            <person name="Kawabata A."/>
            <person name="Hikiji T."/>
            <person name="Kobatake N."/>
            <person name="Inagaki H."/>
            <person name="Ikema Y."/>
            <person name="Okamoto S."/>
            <person name="Okitani R."/>
            <person name="Kawakami T."/>
            <person name="Noguchi S."/>
            <person name="Itoh T."/>
            <person name="Shigeta K."/>
            <person name="Senba T."/>
            <person name="Matsumura K."/>
            <person name="Nakajima Y."/>
            <person name="Mizuno T."/>
            <person name="Morinaga M."/>
            <person name="Sasaki M."/>
            <person name="Togashi T."/>
            <person name="Oyama M."/>
            <person name="Hata H."/>
            <person name="Watanabe M."/>
            <person name="Komatsu T."/>
            <person name="Mizushima-Sugano J."/>
            <person name="Satoh T."/>
            <person name="Shirai Y."/>
            <person name="Takahashi Y."/>
            <person name="Nakagawa K."/>
            <person name="Okumura K."/>
            <person name="Nagase T."/>
            <person name="Nomura N."/>
            <person name="Kikuchi H."/>
            <person name="Masuho Y."/>
            <person name="Yamashita R."/>
            <person name="Nakai K."/>
            <person name="Yada T."/>
            <person name="Nakamura Y."/>
            <person name="Ohara O."/>
            <person name="Isogai T."/>
            <person name="Sugano S."/>
        </authorList>
    </citation>
    <scope>NUCLEOTIDE SEQUENCE [LARGE SCALE MRNA]</scope>
    <source>
        <tissue>Ovary</tissue>
    </source>
</reference>
<reference key="6">
    <citation type="submission" date="2005-07" db="EMBL/GenBank/DDBJ databases">
        <authorList>
            <person name="Mural R.J."/>
            <person name="Istrail S."/>
            <person name="Sutton G.G."/>
            <person name="Florea L."/>
            <person name="Halpern A.L."/>
            <person name="Mobarry C.M."/>
            <person name="Lippert R."/>
            <person name="Walenz B."/>
            <person name="Shatkay H."/>
            <person name="Dew I."/>
            <person name="Miller J.R."/>
            <person name="Flanigan M.J."/>
            <person name="Edwards N.J."/>
            <person name="Bolanos R."/>
            <person name="Fasulo D."/>
            <person name="Halldorsson B.V."/>
            <person name="Hannenhalli S."/>
            <person name="Turner R."/>
            <person name="Yooseph S."/>
            <person name="Lu F."/>
            <person name="Nusskern D.R."/>
            <person name="Shue B.C."/>
            <person name="Zheng X.H."/>
            <person name="Zhong F."/>
            <person name="Delcher A.L."/>
            <person name="Huson D.H."/>
            <person name="Kravitz S.A."/>
            <person name="Mouchard L."/>
            <person name="Reinert K."/>
            <person name="Remington K.A."/>
            <person name="Clark A.G."/>
            <person name="Waterman M.S."/>
            <person name="Eichler E.E."/>
            <person name="Adams M.D."/>
            <person name="Hunkapiller M.W."/>
            <person name="Myers E.W."/>
            <person name="Venter J.C."/>
        </authorList>
    </citation>
    <scope>NUCLEOTIDE SEQUENCE [LARGE SCALE GENOMIC DNA]</scope>
</reference>
<reference key="7">
    <citation type="journal article" date="2004" name="Genome Res.">
        <title>The status, quality, and expansion of the NIH full-length cDNA project: the Mammalian Gene Collection (MGC).</title>
        <authorList>
            <consortium name="The MGC Project Team"/>
        </authorList>
    </citation>
    <scope>NUCLEOTIDE SEQUENCE [LARGE SCALE MRNA]</scope>
    <source>
        <tissue>Lung</tissue>
    </source>
</reference>
<reference key="8">
    <citation type="journal article" date="2014" name="Biochemistry">
        <title>Distinct properties of the two isoforms of CDP-diacylglycerol synthase.</title>
        <authorList>
            <person name="D'Souza K."/>
            <person name="Kim Y.J."/>
            <person name="Balla T."/>
            <person name="Epand R.M."/>
        </authorList>
    </citation>
    <scope>FUNCTION</scope>
    <scope>CATALYTIC ACTIVITY</scope>
    <scope>SUBCELLULAR LOCATION</scope>
    <scope>BIOPHYSICOCHEMICAL PROPERTIES</scope>
    <scope>ACTIVITY REGULATION</scope>
</reference>
<reference key="9">
    <citation type="journal article" date="2016" name="J. Lipid Res.">
        <title>CDP-diacylglycerol synthases regulate the growth of lipid droplets and adipocyte development.</title>
        <authorList>
            <person name="Qi Y."/>
            <person name="Kapterian T.S."/>
            <person name="Du X."/>
            <person name="Ma Q."/>
            <person name="Fei W."/>
            <person name="Zhang Y."/>
            <person name="Huang X."/>
            <person name="Dawes I.W."/>
            <person name="Yang H."/>
        </authorList>
    </citation>
    <scope>FUNCTION</scope>
    <scope>SUBCELLULAR LOCATION</scope>
</reference>
<reference key="10">
    <citation type="journal article" date="2019" name="J. Biol. Chem.">
        <title>CDP-DAG synthase 1 and 2 regulate lipid droplet growth through distinct mechanisms.</title>
        <authorList>
            <person name="Xu Y."/>
            <person name="Mak H.Y."/>
            <person name="Lukmantara I."/>
            <person name="Li Y.E."/>
            <person name="Hoehn K.L."/>
            <person name="Huang X."/>
            <person name="Du X."/>
            <person name="Yang H."/>
        </authorList>
    </citation>
    <scope>FUNCTION</scope>
    <scope>SUBCELLULAR LOCATION</scope>
</reference>
<reference key="11">
    <citation type="journal article" date="2006" name="Science">
        <title>The consensus coding sequences of human breast and colorectal cancers.</title>
        <authorList>
            <person name="Sjoeblom T."/>
            <person name="Jones S."/>
            <person name="Wood L.D."/>
            <person name="Parsons D.W."/>
            <person name="Lin J."/>
            <person name="Barber T.D."/>
            <person name="Mandelker D."/>
            <person name="Leary R.J."/>
            <person name="Ptak J."/>
            <person name="Silliman N."/>
            <person name="Szabo S."/>
            <person name="Buckhaults P."/>
            <person name="Farrell C."/>
            <person name="Meeh P."/>
            <person name="Markowitz S.D."/>
            <person name="Willis J."/>
            <person name="Dawson D."/>
            <person name="Willson J.K.V."/>
            <person name="Gazdar A.F."/>
            <person name="Hartigan J."/>
            <person name="Wu L."/>
            <person name="Liu C."/>
            <person name="Parmigiani G."/>
            <person name="Park B.H."/>
            <person name="Bachman K.E."/>
            <person name="Papadopoulos N."/>
            <person name="Vogelstein B."/>
            <person name="Kinzler K.W."/>
            <person name="Velculescu V.E."/>
        </authorList>
    </citation>
    <scope>VARIANT [LARGE SCALE ANALYSIS] THR-204</scope>
</reference>
<accession>Q92903</accession>
<accession>B2RAL5</accession>
<accession>O00163</accession>